<feature type="chain" id="PRO_1000131932" description="Leucyl/phenylalanyl-tRNA--protein transferase">
    <location>
        <begin position="1"/>
        <end position="191"/>
    </location>
</feature>
<gene>
    <name evidence="1" type="primary">aat</name>
    <name type="ordered locus">Npun_F4039</name>
</gene>
<organism>
    <name type="scientific">Nostoc punctiforme (strain ATCC 29133 / PCC 73102)</name>
    <dbReference type="NCBI Taxonomy" id="63737"/>
    <lineage>
        <taxon>Bacteria</taxon>
        <taxon>Bacillati</taxon>
        <taxon>Cyanobacteriota</taxon>
        <taxon>Cyanophyceae</taxon>
        <taxon>Nostocales</taxon>
        <taxon>Nostocaceae</taxon>
        <taxon>Nostoc</taxon>
    </lineage>
</organism>
<reference key="1">
    <citation type="journal article" date="2013" name="Plant Physiol.">
        <title>A Nostoc punctiforme Sugar Transporter Necessary to Establish a Cyanobacterium-Plant Symbiosis.</title>
        <authorList>
            <person name="Ekman M."/>
            <person name="Picossi S."/>
            <person name="Campbell E.L."/>
            <person name="Meeks J.C."/>
            <person name="Flores E."/>
        </authorList>
    </citation>
    <scope>NUCLEOTIDE SEQUENCE [LARGE SCALE GENOMIC DNA]</scope>
    <source>
        <strain>ATCC 29133 / PCC 73102</strain>
    </source>
</reference>
<comment type="function">
    <text evidence="1">Functions in the N-end rule pathway of protein degradation where it conjugates Leu, Phe and, less efficiently, Met from aminoacyl-tRNAs to the N-termini of proteins containing an N-terminal arginine or lysine.</text>
</comment>
<comment type="catalytic activity">
    <reaction evidence="1">
        <text>N-terminal L-lysyl-[protein] + L-leucyl-tRNA(Leu) = N-terminal L-leucyl-L-lysyl-[protein] + tRNA(Leu) + H(+)</text>
        <dbReference type="Rhea" id="RHEA:12340"/>
        <dbReference type="Rhea" id="RHEA-COMP:9613"/>
        <dbReference type="Rhea" id="RHEA-COMP:9622"/>
        <dbReference type="Rhea" id="RHEA-COMP:12670"/>
        <dbReference type="Rhea" id="RHEA-COMP:12671"/>
        <dbReference type="ChEBI" id="CHEBI:15378"/>
        <dbReference type="ChEBI" id="CHEBI:65249"/>
        <dbReference type="ChEBI" id="CHEBI:78442"/>
        <dbReference type="ChEBI" id="CHEBI:78494"/>
        <dbReference type="ChEBI" id="CHEBI:133043"/>
        <dbReference type="EC" id="2.3.2.6"/>
    </reaction>
</comment>
<comment type="catalytic activity">
    <reaction evidence="1">
        <text>N-terminal L-arginyl-[protein] + L-leucyl-tRNA(Leu) = N-terminal L-leucyl-L-arginyl-[protein] + tRNA(Leu) + H(+)</text>
        <dbReference type="Rhea" id="RHEA:50416"/>
        <dbReference type="Rhea" id="RHEA-COMP:9613"/>
        <dbReference type="Rhea" id="RHEA-COMP:9622"/>
        <dbReference type="Rhea" id="RHEA-COMP:12672"/>
        <dbReference type="Rhea" id="RHEA-COMP:12673"/>
        <dbReference type="ChEBI" id="CHEBI:15378"/>
        <dbReference type="ChEBI" id="CHEBI:64719"/>
        <dbReference type="ChEBI" id="CHEBI:78442"/>
        <dbReference type="ChEBI" id="CHEBI:78494"/>
        <dbReference type="ChEBI" id="CHEBI:133044"/>
        <dbReference type="EC" id="2.3.2.6"/>
    </reaction>
</comment>
<comment type="catalytic activity">
    <reaction evidence="1">
        <text>L-phenylalanyl-tRNA(Phe) + an N-terminal L-alpha-aminoacyl-[protein] = an N-terminal L-phenylalanyl-L-alpha-aminoacyl-[protein] + tRNA(Phe)</text>
        <dbReference type="Rhea" id="RHEA:43632"/>
        <dbReference type="Rhea" id="RHEA-COMP:9668"/>
        <dbReference type="Rhea" id="RHEA-COMP:9699"/>
        <dbReference type="Rhea" id="RHEA-COMP:10636"/>
        <dbReference type="Rhea" id="RHEA-COMP:10637"/>
        <dbReference type="ChEBI" id="CHEBI:78442"/>
        <dbReference type="ChEBI" id="CHEBI:78531"/>
        <dbReference type="ChEBI" id="CHEBI:78597"/>
        <dbReference type="ChEBI" id="CHEBI:83561"/>
        <dbReference type="EC" id="2.3.2.6"/>
    </reaction>
</comment>
<comment type="subcellular location">
    <subcellularLocation>
        <location evidence="1">Cytoplasm</location>
    </subcellularLocation>
</comment>
<comment type="similarity">
    <text evidence="1">Belongs to the L/F-transferase family.</text>
</comment>
<protein>
    <recommendedName>
        <fullName evidence="1">Leucyl/phenylalanyl-tRNA--protein transferase</fullName>
        <ecNumber evidence="1">2.3.2.6</ecNumber>
    </recommendedName>
    <alternativeName>
        <fullName evidence="1">L/F-transferase</fullName>
    </alternativeName>
    <alternativeName>
        <fullName evidence="1">Leucyltransferase</fullName>
    </alternativeName>
    <alternativeName>
        <fullName evidence="1">Phenyalanyltransferase</fullName>
    </alternativeName>
</protein>
<accession>B2J6L3</accession>
<sequence>MQYDIAAIVEGYAQGYFLMADERDRLSWYGSRDRTFIPLDERFRYPKSLQRVLNQERFTVAINRDFQAVVAGCADRETTWISPELEKIYWLLYQSGYAFSFETWQGDELAGGILGIVIGGAFIGESMFYRIPEGSKVAMVKLVERLRQRKFVFFDAQMMNPHLERFGAYRVKDEGYQVLLEQALQRACNLV</sequence>
<proteinExistence type="inferred from homology"/>
<keyword id="KW-0012">Acyltransferase</keyword>
<keyword id="KW-0963">Cytoplasm</keyword>
<keyword id="KW-1185">Reference proteome</keyword>
<keyword id="KW-0808">Transferase</keyword>
<dbReference type="EC" id="2.3.2.6" evidence="1"/>
<dbReference type="EMBL" id="CP001037">
    <property type="protein sequence ID" value="ACC82418.1"/>
    <property type="molecule type" value="Genomic_DNA"/>
</dbReference>
<dbReference type="RefSeq" id="WP_012410385.1">
    <property type="nucleotide sequence ID" value="NC_010628.1"/>
</dbReference>
<dbReference type="SMR" id="B2J6L3"/>
<dbReference type="STRING" id="63737.Npun_F4039"/>
<dbReference type="EnsemblBacteria" id="ACC82418">
    <property type="protein sequence ID" value="ACC82418"/>
    <property type="gene ID" value="Npun_F4039"/>
</dbReference>
<dbReference type="KEGG" id="npu:Npun_F4039"/>
<dbReference type="eggNOG" id="COG2360">
    <property type="taxonomic scope" value="Bacteria"/>
</dbReference>
<dbReference type="HOGENOM" id="CLU_075045_1_1_3"/>
<dbReference type="OrthoDB" id="9790282at2"/>
<dbReference type="PhylomeDB" id="B2J6L3"/>
<dbReference type="Proteomes" id="UP000001191">
    <property type="component" value="Chromosome"/>
</dbReference>
<dbReference type="GO" id="GO:0005737">
    <property type="term" value="C:cytoplasm"/>
    <property type="evidence" value="ECO:0007669"/>
    <property type="project" value="UniProtKB-SubCell"/>
</dbReference>
<dbReference type="GO" id="GO:0008914">
    <property type="term" value="F:leucyl-tRNA--protein transferase activity"/>
    <property type="evidence" value="ECO:0007669"/>
    <property type="project" value="UniProtKB-UniRule"/>
</dbReference>
<dbReference type="GO" id="GO:0030163">
    <property type="term" value="P:protein catabolic process"/>
    <property type="evidence" value="ECO:0007669"/>
    <property type="project" value="UniProtKB-UniRule"/>
</dbReference>
<dbReference type="Gene3D" id="3.40.630.70">
    <property type="entry name" value="Leucyl/phenylalanyl-tRNA-protein transferase, C-terminal domain"/>
    <property type="match status" value="1"/>
</dbReference>
<dbReference type="HAMAP" id="MF_00688">
    <property type="entry name" value="Leu_Phe_trans"/>
    <property type="match status" value="1"/>
</dbReference>
<dbReference type="InterPro" id="IPR016181">
    <property type="entry name" value="Acyl_CoA_acyltransferase"/>
</dbReference>
<dbReference type="InterPro" id="IPR004616">
    <property type="entry name" value="Leu/Phe-tRNA_Trfase"/>
</dbReference>
<dbReference type="InterPro" id="IPR042203">
    <property type="entry name" value="Leu/Phe-tRNA_Trfase_C"/>
</dbReference>
<dbReference type="NCBIfam" id="TIGR00667">
    <property type="entry name" value="aat"/>
    <property type="match status" value="1"/>
</dbReference>
<dbReference type="PANTHER" id="PTHR30098">
    <property type="entry name" value="LEUCYL/PHENYLALANYL-TRNA--PROTEIN TRANSFERASE"/>
    <property type="match status" value="1"/>
</dbReference>
<dbReference type="PANTHER" id="PTHR30098:SF2">
    <property type="entry name" value="LEUCYL_PHENYLALANYL-TRNA--PROTEIN TRANSFERASE"/>
    <property type="match status" value="1"/>
</dbReference>
<dbReference type="Pfam" id="PF03588">
    <property type="entry name" value="Leu_Phe_trans"/>
    <property type="match status" value="1"/>
</dbReference>
<dbReference type="SUPFAM" id="SSF55729">
    <property type="entry name" value="Acyl-CoA N-acyltransferases (Nat)"/>
    <property type="match status" value="1"/>
</dbReference>
<name>LFTR_NOSP7</name>
<evidence type="ECO:0000255" key="1">
    <source>
        <dbReference type="HAMAP-Rule" id="MF_00688"/>
    </source>
</evidence>